<protein>
    <recommendedName>
        <fullName evidence="1">3-methyl-2-oxobutanoate hydroxymethyltransferase</fullName>
        <ecNumber evidence="1">2.1.2.11</ecNumber>
    </recommendedName>
    <alternativeName>
        <fullName evidence="1">Ketopantoate hydroxymethyltransferase</fullName>
        <shortName evidence="1">KPHMT</shortName>
    </alternativeName>
</protein>
<reference key="1">
    <citation type="journal article" date="1999" name="Genetics">
        <title>Divergence of the hyperthermophilic archaea Pyrococcus furiosus and P. horikoshii inferred from complete genomic sequences.</title>
        <authorList>
            <person name="Maeder D.L."/>
            <person name="Weiss R.B."/>
            <person name="Dunn D.M."/>
            <person name="Cherry J.L."/>
            <person name="Gonzalez J.M."/>
            <person name="DiRuggiero J."/>
            <person name="Robb F.T."/>
        </authorList>
    </citation>
    <scope>NUCLEOTIDE SEQUENCE [LARGE SCALE GENOMIC DNA]</scope>
    <source>
        <strain>ATCC 43587 / DSM 3638 / JCM 8422 / Vc1</strain>
    </source>
</reference>
<comment type="function">
    <text evidence="1">Catalyzes the reversible reaction in which hydroxymethyl group from 5,10-methylenetetrahydrofolate is transferred onto alpha-ketoisovalerate to form ketopantoate.</text>
</comment>
<comment type="catalytic activity">
    <reaction evidence="1">
        <text>3-methyl-2-oxobutanoate + (6R)-5,10-methylene-5,6,7,8-tetrahydrofolate + H2O = 2-dehydropantoate + (6S)-5,6,7,8-tetrahydrofolate</text>
        <dbReference type="Rhea" id="RHEA:11824"/>
        <dbReference type="ChEBI" id="CHEBI:11561"/>
        <dbReference type="ChEBI" id="CHEBI:11851"/>
        <dbReference type="ChEBI" id="CHEBI:15377"/>
        <dbReference type="ChEBI" id="CHEBI:15636"/>
        <dbReference type="ChEBI" id="CHEBI:57453"/>
        <dbReference type="EC" id="2.1.2.11"/>
    </reaction>
</comment>
<comment type="cofactor">
    <cofactor evidence="1">
        <name>Mg(2+)</name>
        <dbReference type="ChEBI" id="CHEBI:18420"/>
    </cofactor>
    <text evidence="1">Binds 1 Mg(2+) ion per subunit.</text>
</comment>
<comment type="pathway">
    <text evidence="1">Cofactor biosynthesis; coenzyme A biosynthesis.</text>
</comment>
<comment type="subunit">
    <text evidence="1">Homodecamer; pentamer of dimers.</text>
</comment>
<comment type="subcellular location">
    <subcellularLocation>
        <location evidence="1">Cytoplasm</location>
    </subcellularLocation>
</comment>
<comment type="similarity">
    <text evidence="1">Belongs to the PanB family.</text>
</comment>
<name>PANB_PYRFU</name>
<dbReference type="EC" id="2.1.2.11" evidence="1"/>
<dbReference type="EMBL" id="AE009950">
    <property type="protein sequence ID" value="AAL81267.1"/>
    <property type="molecule type" value="Genomic_DNA"/>
</dbReference>
<dbReference type="RefSeq" id="WP_011012283.1">
    <property type="nucleotide sequence ID" value="NZ_CP023154.1"/>
</dbReference>
<dbReference type="SMR" id="Q8U1R2"/>
<dbReference type="STRING" id="186497.PF1143"/>
<dbReference type="PaxDb" id="186497-PF1143"/>
<dbReference type="GeneID" id="41712952"/>
<dbReference type="KEGG" id="pfu:PF1143"/>
<dbReference type="PATRIC" id="fig|186497.12.peg.1204"/>
<dbReference type="eggNOG" id="arCOG00584">
    <property type="taxonomic scope" value="Archaea"/>
</dbReference>
<dbReference type="HOGENOM" id="CLU_036645_1_0_2"/>
<dbReference type="OrthoDB" id="8414at2157"/>
<dbReference type="PhylomeDB" id="Q8U1R2"/>
<dbReference type="UniPathway" id="UPA00241"/>
<dbReference type="Proteomes" id="UP000001013">
    <property type="component" value="Chromosome"/>
</dbReference>
<dbReference type="GO" id="GO:0005737">
    <property type="term" value="C:cytoplasm"/>
    <property type="evidence" value="ECO:0007669"/>
    <property type="project" value="UniProtKB-SubCell"/>
</dbReference>
<dbReference type="GO" id="GO:0003864">
    <property type="term" value="F:3-methyl-2-oxobutanoate hydroxymethyltransferase activity"/>
    <property type="evidence" value="ECO:0007669"/>
    <property type="project" value="UniProtKB-UniRule"/>
</dbReference>
<dbReference type="GO" id="GO:0000287">
    <property type="term" value="F:magnesium ion binding"/>
    <property type="evidence" value="ECO:0007669"/>
    <property type="project" value="TreeGrafter"/>
</dbReference>
<dbReference type="GO" id="GO:0015937">
    <property type="term" value="P:coenzyme A biosynthetic process"/>
    <property type="evidence" value="ECO:0007669"/>
    <property type="project" value="UniProtKB-UniRule"/>
</dbReference>
<dbReference type="GO" id="GO:0015940">
    <property type="term" value="P:pantothenate biosynthetic process"/>
    <property type="evidence" value="ECO:0007669"/>
    <property type="project" value="InterPro"/>
</dbReference>
<dbReference type="CDD" id="cd06557">
    <property type="entry name" value="KPHMT-like"/>
    <property type="match status" value="1"/>
</dbReference>
<dbReference type="FunFam" id="3.20.20.60:FF:000003">
    <property type="entry name" value="3-methyl-2-oxobutanoate hydroxymethyltransferase"/>
    <property type="match status" value="1"/>
</dbReference>
<dbReference type="Gene3D" id="3.20.20.60">
    <property type="entry name" value="Phosphoenolpyruvate-binding domains"/>
    <property type="match status" value="1"/>
</dbReference>
<dbReference type="HAMAP" id="MF_00156">
    <property type="entry name" value="PanB"/>
    <property type="match status" value="1"/>
</dbReference>
<dbReference type="InterPro" id="IPR003700">
    <property type="entry name" value="Pantoate_hydroxy_MeTrfase"/>
</dbReference>
<dbReference type="InterPro" id="IPR015813">
    <property type="entry name" value="Pyrv/PenolPyrv_kinase-like_dom"/>
</dbReference>
<dbReference type="InterPro" id="IPR040442">
    <property type="entry name" value="Pyrv_kinase-like_dom_sf"/>
</dbReference>
<dbReference type="NCBIfam" id="TIGR00222">
    <property type="entry name" value="panB"/>
    <property type="match status" value="1"/>
</dbReference>
<dbReference type="NCBIfam" id="NF001452">
    <property type="entry name" value="PRK00311.1"/>
    <property type="match status" value="1"/>
</dbReference>
<dbReference type="PANTHER" id="PTHR20881">
    <property type="entry name" value="3-METHYL-2-OXOBUTANOATE HYDROXYMETHYLTRANSFERASE"/>
    <property type="match status" value="1"/>
</dbReference>
<dbReference type="PANTHER" id="PTHR20881:SF0">
    <property type="entry name" value="3-METHYL-2-OXOBUTANOATE HYDROXYMETHYLTRANSFERASE"/>
    <property type="match status" value="1"/>
</dbReference>
<dbReference type="Pfam" id="PF02548">
    <property type="entry name" value="Pantoate_transf"/>
    <property type="match status" value="1"/>
</dbReference>
<dbReference type="PIRSF" id="PIRSF000388">
    <property type="entry name" value="Pantoate_hydroxy_MeTrfase"/>
    <property type="match status" value="1"/>
</dbReference>
<dbReference type="SUPFAM" id="SSF51621">
    <property type="entry name" value="Phosphoenolpyruvate/pyruvate domain"/>
    <property type="match status" value="1"/>
</dbReference>
<sequence length="283" mass="31890">MREITPKRIMEMKGKEKITMITAYDYPSALLADKAGFDIVFVGDSLGMVVYGEQNTLNVTMDQMIFHTRAVAKAVKRALVLADMPFGSYEVSVEEGVKNAIKLIQAGADAVKIEGGYDHRKLVKKLVRMGIPVMGHTGLTPQRYLRLGGYRIMGENEEEVEEILRDAKALEKAGAFAVVLEFVLADVAKLVTEEVSIPTIGIGSGPYVDGQVLVWHDVLGLYESSPPFAKRYANLREEILRAISEFRKEVKEGKFPGKEHYWEYQDKETFNRIKENVMRKLRL</sequence>
<accession>Q8U1R2</accession>
<evidence type="ECO:0000255" key="1">
    <source>
        <dbReference type="HAMAP-Rule" id="MF_00156"/>
    </source>
</evidence>
<keyword id="KW-0173">Coenzyme A biosynthesis</keyword>
<keyword id="KW-0963">Cytoplasm</keyword>
<keyword id="KW-0460">Magnesium</keyword>
<keyword id="KW-0479">Metal-binding</keyword>
<keyword id="KW-1185">Reference proteome</keyword>
<keyword id="KW-0808">Transferase</keyword>
<feature type="chain" id="PRO_0000184919" description="3-methyl-2-oxobutanoate hydroxymethyltransferase">
    <location>
        <begin position="1"/>
        <end position="283"/>
    </location>
</feature>
<feature type="active site" description="Proton acceptor" evidence="1">
    <location>
        <position position="181"/>
    </location>
</feature>
<feature type="binding site" evidence="1">
    <location>
        <begin position="44"/>
        <end position="45"/>
    </location>
    <ligand>
        <name>3-methyl-2-oxobutanoate</name>
        <dbReference type="ChEBI" id="CHEBI:11851"/>
    </ligand>
</feature>
<feature type="binding site" evidence="1">
    <location>
        <position position="44"/>
    </location>
    <ligand>
        <name>Mg(2+)</name>
        <dbReference type="ChEBI" id="CHEBI:18420"/>
    </ligand>
</feature>
<feature type="binding site" evidence="1">
    <location>
        <position position="83"/>
    </location>
    <ligand>
        <name>3-methyl-2-oxobutanoate</name>
        <dbReference type="ChEBI" id="CHEBI:11851"/>
    </ligand>
</feature>
<feature type="binding site" evidence="1">
    <location>
        <position position="83"/>
    </location>
    <ligand>
        <name>Mg(2+)</name>
        <dbReference type="ChEBI" id="CHEBI:18420"/>
    </ligand>
</feature>
<feature type="binding site" evidence="1">
    <location>
        <position position="112"/>
    </location>
    <ligand>
        <name>3-methyl-2-oxobutanoate</name>
        <dbReference type="ChEBI" id="CHEBI:11851"/>
    </ligand>
</feature>
<feature type="binding site" evidence="1">
    <location>
        <position position="114"/>
    </location>
    <ligand>
        <name>Mg(2+)</name>
        <dbReference type="ChEBI" id="CHEBI:18420"/>
    </ligand>
</feature>
<organism>
    <name type="scientific">Pyrococcus furiosus (strain ATCC 43587 / DSM 3638 / JCM 8422 / Vc1)</name>
    <dbReference type="NCBI Taxonomy" id="186497"/>
    <lineage>
        <taxon>Archaea</taxon>
        <taxon>Methanobacteriati</taxon>
        <taxon>Methanobacteriota</taxon>
        <taxon>Thermococci</taxon>
        <taxon>Thermococcales</taxon>
        <taxon>Thermococcaceae</taxon>
        <taxon>Pyrococcus</taxon>
    </lineage>
</organism>
<gene>
    <name evidence="1" type="primary">panB</name>
    <name type="ordered locus">PF1143</name>
</gene>
<proteinExistence type="inferred from homology"/>